<proteinExistence type="inferred from homology"/>
<dbReference type="EC" id="2.7.7.6" evidence="1"/>
<dbReference type="EMBL" id="CP000237">
    <property type="protein sequence ID" value="ABD45983.1"/>
    <property type="molecule type" value="Genomic_DNA"/>
</dbReference>
<dbReference type="RefSeq" id="WP_011452061.1">
    <property type="nucleotide sequence ID" value="NC_007798.1"/>
</dbReference>
<dbReference type="SMR" id="Q2GD91"/>
<dbReference type="STRING" id="222891.NSE_0677"/>
<dbReference type="KEGG" id="nse:NSE_0677"/>
<dbReference type="eggNOG" id="COG0086">
    <property type="taxonomic scope" value="Bacteria"/>
</dbReference>
<dbReference type="HOGENOM" id="CLU_000524_3_1_5"/>
<dbReference type="OrthoDB" id="9815296at2"/>
<dbReference type="Proteomes" id="UP000001942">
    <property type="component" value="Chromosome"/>
</dbReference>
<dbReference type="GO" id="GO:0000428">
    <property type="term" value="C:DNA-directed RNA polymerase complex"/>
    <property type="evidence" value="ECO:0007669"/>
    <property type="project" value="UniProtKB-KW"/>
</dbReference>
<dbReference type="GO" id="GO:0003677">
    <property type="term" value="F:DNA binding"/>
    <property type="evidence" value="ECO:0007669"/>
    <property type="project" value="UniProtKB-UniRule"/>
</dbReference>
<dbReference type="GO" id="GO:0003899">
    <property type="term" value="F:DNA-directed RNA polymerase activity"/>
    <property type="evidence" value="ECO:0007669"/>
    <property type="project" value="UniProtKB-UniRule"/>
</dbReference>
<dbReference type="GO" id="GO:0000287">
    <property type="term" value="F:magnesium ion binding"/>
    <property type="evidence" value="ECO:0007669"/>
    <property type="project" value="UniProtKB-UniRule"/>
</dbReference>
<dbReference type="GO" id="GO:0008270">
    <property type="term" value="F:zinc ion binding"/>
    <property type="evidence" value="ECO:0007669"/>
    <property type="project" value="UniProtKB-UniRule"/>
</dbReference>
<dbReference type="GO" id="GO:0006351">
    <property type="term" value="P:DNA-templated transcription"/>
    <property type="evidence" value="ECO:0007669"/>
    <property type="project" value="UniProtKB-UniRule"/>
</dbReference>
<dbReference type="CDD" id="cd02655">
    <property type="entry name" value="RNAP_beta'_C"/>
    <property type="match status" value="1"/>
</dbReference>
<dbReference type="CDD" id="cd01609">
    <property type="entry name" value="RNAP_beta'_N"/>
    <property type="match status" value="1"/>
</dbReference>
<dbReference type="Gene3D" id="1.10.132.30">
    <property type="match status" value="1"/>
</dbReference>
<dbReference type="Gene3D" id="1.10.150.390">
    <property type="match status" value="1"/>
</dbReference>
<dbReference type="Gene3D" id="1.10.1790.20">
    <property type="match status" value="1"/>
</dbReference>
<dbReference type="Gene3D" id="1.10.40.90">
    <property type="match status" value="1"/>
</dbReference>
<dbReference type="Gene3D" id="2.40.40.20">
    <property type="match status" value="1"/>
</dbReference>
<dbReference type="Gene3D" id="2.40.50.100">
    <property type="match status" value="3"/>
</dbReference>
<dbReference type="Gene3D" id="4.10.860.120">
    <property type="entry name" value="RNA polymerase II, clamp domain"/>
    <property type="match status" value="1"/>
</dbReference>
<dbReference type="Gene3D" id="1.10.274.100">
    <property type="entry name" value="RNA polymerase Rpb1, domain 3"/>
    <property type="match status" value="2"/>
</dbReference>
<dbReference type="HAMAP" id="MF_01322">
    <property type="entry name" value="RNApol_bact_RpoC"/>
    <property type="match status" value="1"/>
</dbReference>
<dbReference type="InterPro" id="IPR045867">
    <property type="entry name" value="DNA-dir_RpoC_beta_prime"/>
</dbReference>
<dbReference type="InterPro" id="IPR012754">
    <property type="entry name" value="DNA-dir_RpoC_beta_prime_bact"/>
</dbReference>
<dbReference type="InterPro" id="IPR000722">
    <property type="entry name" value="RNA_pol_asu"/>
</dbReference>
<dbReference type="InterPro" id="IPR006592">
    <property type="entry name" value="RNA_pol_N"/>
</dbReference>
<dbReference type="InterPro" id="IPR007080">
    <property type="entry name" value="RNA_pol_Rpb1_1"/>
</dbReference>
<dbReference type="InterPro" id="IPR007066">
    <property type="entry name" value="RNA_pol_Rpb1_3"/>
</dbReference>
<dbReference type="InterPro" id="IPR042102">
    <property type="entry name" value="RNA_pol_Rpb1_3_sf"/>
</dbReference>
<dbReference type="InterPro" id="IPR007083">
    <property type="entry name" value="RNA_pol_Rpb1_4"/>
</dbReference>
<dbReference type="InterPro" id="IPR007081">
    <property type="entry name" value="RNA_pol_Rpb1_5"/>
</dbReference>
<dbReference type="InterPro" id="IPR044893">
    <property type="entry name" value="RNA_pol_Rpb1_clamp_domain"/>
</dbReference>
<dbReference type="InterPro" id="IPR038120">
    <property type="entry name" value="Rpb1_funnel_sf"/>
</dbReference>
<dbReference type="NCBIfam" id="TIGR02386">
    <property type="entry name" value="rpoC_TIGR"/>
    <property type="match status" value="1"/>
</dbReference>
<dbReference type="PANTHER" id="PTHR19376">
    <property type="entry name" value="DNA-DIRECTED RNA POLYMERASE"/>
    <property type="match status" value="1"/>
</dbReference>
<dbReference type="PANTHER" id="PTHR19376:SF54">
    <property type="entry name" value="DNA-DIRECTED RNA POLYMERASE SUBUNIT BETA"/>
    <property type="match status" value="1"/>
</dbReference>
<dbReference type="Pfam" id="PF04997">
    <property type="entry name" value="RNA_pol_Rpb1_1"/>
    <property type="match status" value="1"/>
</dbReference>
<dbReference type="Pfam" id="PF00623">
    <property type="entry name" value="RNA_pol_Rpb1_2"/>
    <property type="match status" value="1"/>
</dbReference>
<dbReference type="Pfam" id="PF04983">
    <property type="entry name" value="RNA_pol_Rpb1_3"/>
    <property type="match status" value="1"/>
</dbReference>
<dbReference type="Pfam" id="PF05000">
    <property type="entry name" value="RNA_pol_Rpb1_4"/>
    <property type="match status" value="1"/>
</dbReference>
<dbReference type="Pfam" id="PF04998">
    <property type="entry name" value="RNA_pol_Rpb1_5"/>
    <property type="match status" value="1"/>
</dbReference>
<dbReference type="SMART" id="SM00663">
    <property type="entry name" value="RPOLA_N"/>
    <property type="match status" value="1"/>
</dbReference>
<dbReference type="SUPFAM" id="SSF64484">
    <property type="entry name" value="beta and beta-prime subunits of DNA dependent RNA-polymerase"/>
    <property type="match status" value="1"/>
</dbReference>
<organism>
    <name type="scientific">Neorickettsia sennetsu (strain ATCC VR-367 / Miyayama)</name>
    <name type="common">Ehrlichia sennetsu</name>
    <dbReference type="NCBI Taxonomy" id="222891"/>
    <lineage>
        <taxon>Bacteria</taxon>
        <taxon>Pseudomonadati</taxon>
        <taxon>Pseudomonadota</taxon>
        <taxon>Alphaproteobacteria</taxon>
        <taxon>Rickettsiales</taxon>
        <taxon>Anaplasmataceae</taxon>
        <taxon>Neorickettsia</taxon>
    </lineage>
</organism>
<evidence type="ECO:0000255" key="1">
    <source>
        <dbReference type="HAMAP-Rule" id="MF_01322"/>
    </source>
</evidence>
<feature type="chain" id="PRO_0000240810" description="DNA-directed RNA polymerase subunit beta'">
    <location>
        <begin position="1"/>
        <end position="1375"/>
    </location>
</feature>
<feature type="binding site" evidence="1">
    <location>
        <position position="70"/>
    </location>
    <ligand>
        <name>Zn(2+)</name>
        <dbReference type="ChEBI" id="CHEBI:29105"/>
        <label>1</label>
    </ligand>
</feature>
<feature type="binding site" evidence="1">
    <location>
        <position position="72"/>
    </location>
    <ligand>
        <name>Zn(2+)</name>
        <dbReference type="ChEBI" id="CHEBI:29105"/>
        <label>1</label>
    </ligand>
</feature>
<feature type="binding site" evidence="1">
    <location>
        <position position="85"/>
    </location>
    <ligand>
        <name>Zn(2+)</name>
        <dbReference type="ChEBI" id="CHEBI:29105"/>
        <label>1</label>
    </ligand>
</feature>
<feature type="binding site" evidence="1">
    <location>
        <position position="88"/>
    </location>
    <ligand>
        <name>Zn(2+)</name>
        <dbReference type="ChEBI" id="CHEBI:29105"/>
        <label>1</label>
    </ligand>
</feature>
<feature type="binding site" evidence="1">
    <location>
        <position position="461"/>
    </location>
    <ligand>
        <name>Mg(2+)</name>
        <dbReference type="ChEBI" id="CHEBI:18420"/>
    </ligand>
</feature>
<feature type="binding site" evidence="1">
    <location>
        <position position="463"/>
    </location>
    <ligand>
        <name>Mg(2+)</name>
        <dbReference type="ChEBI" id="CHEBI:18420"/>
    </ligand>
</feature>
<feature type="binding site" evidence="1">
    <location>
        <position position="465"/>
    </location>
    <ligand>
        <name>Mg(2+)</name>
        <dbReference type="ChEBI" id="CHEBI:18420"/>
    </ligand>
</feature>
<feature type="binding site" evidence="1">
    <location>
        <position position="797"/>
    </location>
    <ligand>
        <name>Zn(2+)</name>
        <dbReference type="ChEBI" id="CHEBI:29105"/>
        <label>2</label>
    </ligand>
</feature>
<feature type="binding site" evidence="1">
    <location>
        <position position="871"/>
    </location>
    <ligand>
        <name>Zn(2+)</name>
        <dbReference type="ChEBI" id="CHEBI:29105"/>
        <label>2</label>
    </ligand>
</feature>
<feature type="binding site" evidence="1">
    <location>
        <position position="878"/>
    </location>
    <ligand>
        <name>Zn(2+)</name>
        <dbReference type="ChEBI" id="CHEBI:29105"/>
        <label>2</label>
    </ligand>
</feature>
<feature type="binding site" evidence="1">
    <location>
        <position position="881"/>
    </location>
    <ligand>
        <name>Zn(2+)</name>
        <dbReference type="ChEBI" id="CHEBI:29105"/>
        <label>2</label>
    </ligand>
</feature>
<name>RPOC_NEOSM</name>
<keyword id="KW-0240">DNA-directed RNA polymerase</keyword>
<keyword id="KW-0460">Magnesium</keyword>
<keyword id="KW-0479">Metal-binding</keyword>
<keyword id="KW-0548">Nucleotidyltransferase</keyword>
<keyword id="KW-0804">Transcription</keyword>
<keyword id="KW-0808">Transferase</keyword>
<keyword id="KW-0862">Zinc</keyword>
<reference key="1">
    <citation type="journal article" date="2006" name="PLoS Genet.">
        <title>Comparative genomics of emerging human ehrlichiosis agents.</title>
        <authorList>
            <person name="Dunning Hotopp J.C."/>
            <person name="Lin M."/>
            <person name="Madupu R."/>
            <person name="Crabtree J."/>
            <person name="Angiuoli S.V."/>
            <person name="Eisen J.A."/>
            <person name="Seshadri R."/>
            <person name="Ren Q."/>
            <person name="Wu M."/>
            <person name="Utterback T.R."/>
            <person name="Smith S."/>
            <person name="Lewis M."/>
            <person name="Khouri H."/>
            <person name="Zhang C."/>
            <person name="Niu H."/>
            <person name="Lin Q."/>
            <person name="Ohashi N."/>
            <person name="Zhi N."/>
            <person name="Nelson W.C."/>
            <person name="Brinkac L.M."/>
            <person name="Dodson R.J."/>
            <person name="Rosovitz M.J."/>
            <person name="Sundaram J.P."/>
            <person name="Daugherty S.C."/>
            <person name="Davidsen T."/>
            <person name="Durkin A.S."/>
            <person name="Gwinn M.L."/>
            <person name="Haft D.H."/>
            <person name="Selengut J.D."/>
            <person name="Sullivan S.A."/>
            <person name="Zafar N."/>
            <person name="Zhou L."/>
            <person name="Benahmed F."/>
            <person name="Forberger H."/>
            <person name="Halpin R."/>
            <person name="Mulligan S."/>
            <person name="Robinson J."/>
            <person name="White O."/>
            <person name="Rikihisa Y."/>
            <person name="Tettelin H."/>
        </authorList>
    </citation>
    <scope>NUCLEOTIDE SEQUENCE [LARGE SCALE GENOMIC DNA]</scope>
    <source>
        <strain>ATCC VR-367 / Miyayama</strain>
    </source>
</reference>
<comment type="function">
    <text evidence="1">DNA-dependent RNA polymerase catalyzes the transcription of DNA into RNA using the four ribonucleoside triphosphates as substrates.</text>
</comment>
<comment type="catalytic activity">
    <reaction evidence="1">
        <text>RNA(n) + a ribonucleoside 5'-triphosphate = RNA(n+1) + diphosphate</text>
        <dbReference type="Rhea" id="RHEA:21248"/>
        <dbReference type="Rhea" id="RHEA-COMP:14527"/>
        <dbReference type="Rhea" id="RHEA-COMP:17342"/>
        <dbReference type="ChEBI" id="CHEBI:33019"/>
        <dbReference type="ChEBI" id="CHEBI:61557"/>
        <dbReference type="ChEBI" id="CHEBI:140395"/>
        <dbReference type="EC" id="2.7.7.6"/>
    </reaction>
</comment>
<comment type="cofactor">
    <cofactor evidence="1">
        <name>Mg(2+)</name>
        <dbReference type="ChEBI" id="CHEBI:18420"/>
    </cofactor>
    <text evidence="1">Binds 1 Mg(2+) ion per subunit.</text>
</comment>
<comment type="cofactor">
    <cofactor evidence="1">
        <name>Zn(2+)</name>
        <dbReference type="ChEBI" id="CHEBI:29105"/>
    </cofactor>
    <text evidence="1">Binds 2 Zn(2+) ions per subunit.</text>
</comment>
<comment type="subunit">
    <text evidence="1">The RNAP catalytic core consists of 2 alpha, 1 beta, 1 beta' and 1 omega subunit. When a sigma factor is associated with the core the holoenzyme is formed, which can initiate transcription.</text>
</comment>
<comment type="similarity">
    <text evidence="1">Belongs to the RNA polymerase beta' chain family.</text>
</comment>
<protein>
    <recommendedName>
        <fullName evidence="1">DNA-directed RNA polymerase subunit beta'</fullName>
        <shortName evidence="1">RNAP subunit beta'</shortName>
        <ecNumber evidence="1">2.7.7.6</ecNumber>
    </recommendedName>
    <alternativeName>
        <fullName evidence="1">RNA polymerase subunit beta'</fullName>
    </alternativeName>
    <alternativeName>
        <fullName evidence="1">Transcriptase subunit beta'</fullName>
    </alternativeName>
</protein>
<sequence length="1375" mass="152090">MGDFRSFRQNGGSSVDFDGIKISLASADKIRSLSYGEVTKPETINYRTFKPEKNGLFCAKIFGPTKSYECLCGKYKKIKYSGVICERCGVEVTSSRVRRERMGHIELASPVAHIWFLKSLPSKICILLDLTLKNVEKVLYFELYIVIDPGVTTFTKNELITDEAYMNAVREYGPDSFTAMIGAEAIRHMLASLDLEKMAVKLRSQAAATNSEVKKKKIIKTLRLVEQFLGSDSRPVDMILDVIPVMPPDLRPLVMLDGGRFATSDLNALYRSVINRNNRLKSLIYLKAPNIIINNERRMLQEAVDALFDNGRRAKVIKGSNKRPYKSISDMLKGKQGRFRQNLLGKRVDYSGRSVIVVGPALELHQCGLPKKIALELFKPFIYSKLELYGIAPTIKTARRMVQNEQPEVWDVLAKVIHQHPVFLNRAPTLHRLSVQAFEPVLIEGKAIQLHPLVCTAFNADFDGDQMSVHVPLSIEAQVEARLLVMSTNNVLNPANSRPIIVPSKDIVLGVYYLSLEEKGGVVHPVTFCATWEAEHAFANGDIGLHTKIRCGIELEDGVKVYTTTFGRLQLLKILPKGVPFESINMVLTVRDISNLVDLVYKTCGHGKTVEFADGIMELGFRYATLSGISFGKDDMVVPPTKSEHVRRANEEVKEYEFQYQEGLITKHEKYNKVVDAWQKCTDLVAKDMMDGISGYESVAEMNSIFMMAQSGARGSAAQIKQLAGMRGLMAKPSGEIIPNPIISNLREGQGVLEYFNSTHGARKGLADTALKTANSGYLTRRLVDVAQDSIIVEEDCGSSNGLVVRATVEGGVVIIPLSDSIFSRVSATDIIDPSDGSVIVRAGEMFDDKSIERIESLGIDSVRIRSVLTCKSKHGICRKCYGADLSNRKLVALGEAVGVIAAQSVGEPGTQLTMRTFHVGGAATRRVENSSMVAFCGGKVKFTNANLITDRDGNYVVLSRSFEILLVDSLGIEHFQGRVQYGGTVYVKEGEVVPIGKKLADWDLYTVPIVAEASGTVSYADMIEGVSYNEVHDESTGILNRMVVDWRQAESSSGLRPRVEILDESGSVAKCQYSKDAVYLLPLGAILNVSNGDVVKAGDVIAKITKESTTTRDITGGLPRVIELFEARKAKVNAVISEIDGYVEFAKDYYKSKRKVIVRSREDKERIYEYLVPKGRHLIVSEGDFIRRGEPLMDGDPDLHEILRVLGLEALAEYMISEIQRVYRLQGVKINNKHIEVIIRKMLQKVEITDAGDTTFLIGEQIDKSRVERINEVMASQGLRCCSYVPVLLGITRASLQTESFISAASFQETTKVLTEAAVAGKVDRLRGLKENIIAGRLLPVGAGYFIDKLKREFTGERQGKQVSVGVGGDLTST</sequence>
<accession>Q2GD91</accession>
<gene>
    <name evidence="1" type="primary">rpoC</name>
    <name type="ordered locus">NSE_0677</name>
</gene>